<accession>Q1BD95</accession>
<name>RL14_MYCSS</name>
<proteinExistence type="inferred from homology"/>
<dbReference type="EMBL" id="CP000384">
    <property type="protein sequence ID" value="ABG07139.1"/>
    <property type="molecule type" value="Genomic_DNA"/>
</dbReference>
<dbReference type="SMR" id="Q1BD95"/>
<dbReference type="KEGG" id="mmc:Mmcs_1025"/>
<dbReference type="HOGENOM" id="CLU_095071_2_1_11"/>
<dbReference type="BioCyc" id="MSP164756:G1G6O-1049-MONOMER"/>
<dbReference type="GO" id="GO:0022625">
    <property type="term" value="C:cytosolic large ribosomal subunit"/>
    <property type="evidence" value="ECO:0007669"/>
    <property type="project" value="TreeGrafter"/>
</dbReference>
<dbReference type="GO" id="GO:0070180">
    <property type="term" value="F:large ribosomal subunit rRNA binding"/>
    <property type="evidence" value="ECO:0007669"/>
    <property type="project" value="TreeGrafter"/>
</dbReference>
<dbReference type="GO" id="GO:0003735">
    <property type="term" value="F:structural constituent of ribosome"/>
    <property type="evidence" value="ECO:0007669"/>
    <property type="project" value="InterPro"/>
</dbReference>
<dbReference type="GO" id="GO:0006412">
    <property type="term" value="P:translation"/>
    <property type="evidence" value="ECO:0007669"/>
    <property type="project" value="UniProtKB-UniRule"/>
</dbReference>
<dbReference type="CDD" id="cd00337">
    <property type="entry name" value="Ribosomal_uL14"/>
    <property type="match status" value="1"/>
</dbReference>
<dbReference type="FunFam" id="2.40.150.20:FF:000001">
    <property type="entry name" value="50S ribosomal protein L14"/>
    <property type="match status" value="1"/>
</dbReference>
<dbReference type="Gene3D" id="2.40.150.20">
    <property type="entry name" value="Ribosomal protein L14"/>
    <property type="match status" value="1"/>
</dbReference>
<dbReference type="HAMAP" id="MF_01367">
    <property type="entry name" value="Ribosomal_uL14"/>
    <property type="match status" value="1"/>
</dbReference>
<dbReference type="InterPro" id="IPR000218">
    <property type="entry name" value="Ribosomal_uL14"/>
</dbReference>
<dbReference type="InterPro" id="IPR005745">
    <property type="entry name" value="Ribosomal_uL14_bac-type"/>
</dbReference>
<dbReference type="InterPro" id="IPR019972">
    <property type="entry name" value="Ribosomal_uL14_CS"/>
</dbReference>
<dbReference type="InterPro" id="IPR036853">
    <property type="entry name" value="Ribosomal_uL14_sf"/>
</dbReference>
<dbReference type="NCBIfam" id="TIGR01067">
    <property type="entry name" value="rplN_bact"/>
    <property type="match status" value="1"/>
</dbReference>
<dbReference type="PANTHER" id="PTHR11761">
    <property type="entry name" value="50S/60S RIBOSOMAL PROTEIN L14/L23"/>
    <property type="match status" value="1"/>
</dbReference>
<dbReference type="PANTHER" id="PTHR11761:SF3">
    <property type="entry name" value="LARGE RIBOSOMAL SUBUNIT PROTEIN UL14M"/>
    <property type="match status" value="1"/>
</dbReference>
<dbReference type="Pfam" id="PF00238">
    <property type="entry name" value="Ribosomal_L14"/>
    <property type="match status" value="1"/>
</dbReference>
<dbReference type="SMART" id="SM01374">
    <property type="entry name" value="Ribosomal_L14"/>
    <property type="match status" value="1"/>
</dbReference>
<dbReference type="SUPFAM" id="SSF50193">
    <property type="entry name" value="Ribosomal protein L14"/>
    <property type="match status" value="1"/>
</dbReference>
<dbReference type="PROSITE" id="PS00049">
    <property type="entry name" value="RIBOSOMAL_L14"/>
    <property type="match status" value="1"/>
</dbReference>
<gene>
    <name evidence="1" type="primary">rplN</name>
    <name type="ordered locus">Mmcs_1025</name>
</gene>
<protein>
    <recommendedName>
        <fullName evidence="1">Large ribosomal subunit protein uL14</fullName>
    </recommendedName>
    <alternativeName>
        <fullName evidence="2">50S ribosomal protein L14</fullName>
    </alternativeName>
</protein>
<sequence length="122" mass="13433">MIQQESRLKVADNTGAKEILCIRVLGGSSRRYAGIGDVIVATVKEAIPGANVKRGDVVKAVVVRTVKERRRADGSYIKFDENAAVIIKNDNDPRGTRIFGPVGRELREKRFMKIVSLAPEVL</sequence>
<comment type="function">
    <text evidence="1">Binds to 23S rRNA. Forms part of two intersubunit bridges in the 70S ribosome.</text>
</comment>
<comment type="subunit">
    <text evidence="1">Part of the 50S ribosomal subunit. Forms a cluster with proteins L3 and L19. In the 70S ribosome, L14 and L19 interact and together make contacts with the 16S rRNA in bridges B5 and B8.</text>
</comment>
<comment type="similarity">
    <text evidence="1">Belongs to the universal ribosomal protein uL14 family.</text>
</comment>
<evidence type="ECO:0000255" key="1">
    <source>
        <dbReference type="HAMAP-Rule" id="MF_01367"/>
    </source>
</evidence>
<evidence type="ECO:0000305" key="2"/>
<reference key="1">
    <citation type="submission" date="2006-06" db="EMBL/GenBank/DDBJ databases">
        <title>Complete sequence of chromosome of Mycobacterium sp. MCS.</title>
        <authorList>
            <consortium name="US DOE Joint Genome Institute"/>
            <person name="Copeland A."/>
            <person name="Lucas S."/>
            <person name="Lapidus A."/>
            <person name="Barry K."/>
            <person name="Detter J.C."/>
            <person name="Glavina del Rio T."/>
            <person name="Hammon N."/>
            <person name="Israni S."/>
            <person name="Dalin E."/>
            <person name="Tice H."/>
            <person name="Pitluck S."/>
            <person name="Martinez M."/>
            <person name="Schmutz J."/>
            <person name="Larimer F."/>
            <person name="Land M."/>
            <person name="Hauser L."/>
            <person name="Kyrpides N."/>
            <person name="Kim E."/>
            <person name="Miller C.D."/>
            <person name="Hughes J.E."/>
            <person name="Anderson A.J."/>
            <person name="Sims R.C."/>
            <person name="Richardson P."/>
        </authorList>
    </citation>
    <scope>NUCLEOTIDE SEQUENCE [LARGE SCALE GENOMIC DNA]</scope>
    <source>
        <strain>MCS</strain>
    </source>
</reference>
<keyword id="KW-0687">Ribonucleoprotein</keyword>
<keyword id="KW-0689">Ribosomal protein</keyword>
<keyword id="KW-0694">RNA-binding</keyword>
<keyword id="KW-0699">rRNA-binding</keyword>
<organism>
    <name type="scientific">Mycobacterium sp. (strain MCS)</name>
    <dbReference type="NCBI Taxonomy" id="164756"/>
    <lineage>
        <taxon>Bacteria</taxon>
        <taxon>Bacillati</taxon>
        <taxon>Actinomycetota</taxon>
        <taxon>Actinomycetes</taxon>
        <taxon>Mycobacteriales</taxon>
        <taxon>Mycobacteriaceae</taxon>
        <taxon>Mycobacterium</taxon>
    </lineage>
</organism>
<feature type="chain" id="PRO_1000055644" description="Large ribosomal subunit protein uL14">
    <location>
        <begin position="1"/>
        <end position="122"/>
    </location>
</feature>